<evidence type="ECO:0000255" key="1">
    <source>
        <dbReference type="HAMAP-Rule" id="MF_01302"/>
    </source>
</evidence>
<evidence type="ECO:0000305" key="2"/>
<accession>Q3JMS7</accession>
<gene>
    <name evidence="1" type="primary">rpsH</name>
    <name type="ordered locus">BURPS1710b_3762</name>
</gene>
<keyword id="KW-0687">Ribonucleoprotein</keyword>
<keyword id="KW-0689">Ribosomal protein</keyword>
<keyword id="KW-0694">RNA-binding</keyword>
<keyword id="KW-0699">rRNA-binding</keyword>
<comment type="function">
    <text evidence="1">One of the primary rRNA binding proteins, it binds directly to 16S rRNA central domain where it helps coordinate assembly of the platform of the 30S subunit.</text>
</comment>
<comment type="subunit">
    <text evidence="1">Part of the 30S ribosomal subunit. Contacts proteins S5 and S12.</text>
</comment>
<comment type="similarity">
    <text evidence="1">Belongs to the universal ribosomal protein uS8 family.</text>
</comment>
<protein>
    <recommendedName>
        <fullName evidence="1">Small ribosomal subunit protein uS8</fullName>
    </recommendedName>
    <alternativeName>
        <fullName evidence="2">30S ribosomal protein S8</fullName>
    </alternativeName>
</protein>
<name>RS8_BURP1</name>
<reference key="1">
    <citation type="journal article" date="2010" name="Genome Biol. Evol.">
        <title>Continuing evolution of Burkholderia mallei through genome reduction and large-scale rearrangements.</title>
        <authorList>
            <person name="Losada L."/>
            <person name="Ronning C.M."/>
            <person name="DeShazer D."/>
            <person name="Woods D."/>
            <person name="Fedorova N."/>
            <person name="Kim H.S."/>
            <person name="Shabalina S.A."/>
            <person name="Pearson T.R."/>
            <person name="Brinkac L."/>
            <person name="Tan P."/>
            <person name="Nandi T."/>
            <person name="Crabtree J."/>
            <person name="Badger J."/>
            <person name="Beckstrom-Sternberg S."/>
            <person name="Saqib M."/>
            <person name="Schutzer S.E."/>
            <person name="Keim P."/>
            <person name="Nierman W.C."/>
        </authorList>
    </citation>
    <scope>NUCLEOTIDE SEQUENCE [LARGE SCALE GENOMIC DNA]</scope>
    <source>
        <strain>1710b</strain>
    </source>
</reference>
<feature type="chain" id="PRO_0000225859" description="Small ribosomal subunit protein uS8">
    <location>
        <begin position="1"/>
        <end position="131"/>
    </location>
</feature>
<dbReference type="EMBL" id="CP000124">
    <property type="protein sequence ID" value="ABA48966.1"/>
    <property type="molecule type" value="Genomic_DNA"/>
</dbReference>
<dbReference type="RefSeq" id="WP_004185153.1">
    <property type="nucleotide sequence ID" value="NC_007434.1"/>
</dbReference>
<dbReference type="SMR" id="Q3JMS7"/>
<dbReference type="EnsemblBacteria" id="ABA48966">
    <property type="protein sequence ID" value="ABA48966"/>
    <property type="gene ID" value="BURPS1710b_3762"/>
</dbReference>
<dbReference type="GeneID" id="93061818"/>
<dbReference type="KEGG" id="bpm:BURPS1710b_3762"/>
<dbReference type="HOGENOM" id="CLU_098428_0_0_4"/>
<dbReference type="Proteomes" id="UP000002700">
    <property type="component" value="Chromosome I"/>
</dbReference>
<dbReference type="GO" id="GO:1990904">
    <property type="term" value="C:ribonucleoprotein complex"/>
    <property type="evidence" value="ECO:0007669"/>
    <property type="project" value="UniProtKB-KW"/>
</dbReference>
<dbReference type="GO" id="GO:0005840">
    <property type="term" value="C:ribosome"/>
    <property type="evidence" value="ECO:0007669"/>
    <property type="project" value="UniProtKB-KW"/>
</dbReference>
<dbReference type="GO" id="GO:0019843">
    <property type="term" value="F:rRNA binding"/>
    <property type="evidence" value="ECO:0007669"/>
    <property type="project" value="UniProtKB-UniRule"/>
</dbReference>
<dbReference type="GO" id="GO:0003735">
    <property type="term" value="F:structural constituent of ribosome"/>
    <property type="evidence" value="ECO:0007669"/>
    <property type="project" value="InterPro"/>
</dbReference>
<dbReference type="GO" id="GO:0006412">
    <property type="term" value="P:translation"/>
    <property type="evidence" value="ECO:0007669"/>
    <property type="project" value="UniProtKB-UniRule"/>
</dbReference>
<dbReference type="FunFam" id="3.30.1370.30:FF:000003">
    <property type="entry name" value="30S ribosomal protein S8"/>
    <property type="match status" value="1"/>
</dbReference>
<dbReference type="FunFam" id="3.30.1490.10:FF:000001">
    <property type="entry name" value="30S ribosomal protein S8"/>
    <property type="match status" value="1"/>
</dbReference>
<dbReference type="Gene3D" id="3.30.1370.30">
    <property type="match status" value="1"/>
</dbReference>
<dbReference type="Gene3D" id="3.30.1490.10">
    <property type="match status" value="1"/>
</dbReference>
<dbReference type="HAMAP" id="MF_01302_B">
    <property type="entry name" value="Ribosomal_uS8_B"/>
    <property type="match status" value="1"/>
</dbReference>
<dbReference type="InterPro" id="IPR000630">
    <property type="entry name" value="Ribosomal_uS8"/>
</dbReference>
<dbReference type="InterPro" id="IPR047863">
    <property type="entry name" value="Ribosomal_uS8_CS"/>
</dbReference>
<dbReference type="InterPro" id="IPR035987">
    <property type="entry name" value="Ribosomal_uS8_sf"/>
</dbReference>
<dbReference type="NCBIfam" id="NF001109">
    <property type="entry name" value="PRK00136.1"/>
    <property type="match status" value="1"/>
</dbReference>
<dbReference type="PANTHER" id="PTHR11758">
    <property type="entry name" value="40S RIBOSOMAL PROTEIN S15A"/>
    <property type="match status" value="1"/>
</dbReference>
<dbReference type="Pfam" id="PF00410">
    <property type="entry name" value="Ribosomal_S8"/>
    <property type="match status" value="1"/>
</dbReference>
<dbReference type="SUPFAM" id="SSF56047">
    <property type="entry name" value="Ribosomal protein S8"/>
    <property type="match status" value="1"/>
</dbReference>
<dbReference type="PROSITE" id="PS00053">
    <property type="entry name" value="RIBOSOMAL_S8"/>
    <property type="match status" value="1"/>
</dbReference>
<proteinExistence type="inferred from homology"/>
<organism>
    <name type="scientific">Burkholderia pseudomallei (strain 1710b)</name>
    <dbReference type="NCBI Taxonomy" id="320372"/>
    <lineage>
        <taxon>Bacteria</taxon>
        <taxon>Pseudomonadati</taxon>
        <taxon>Pseudomonadota</taxon>
        <taxon>Betaproteobacteria</taxon>
        <taxon>Burkholderiales</taxon>
        <taxon>Burkholderiaceae</taxon>
        <taxon>Burkholderia</taxon>
        <taxon>pseudomallei group</taxon>
    </lineage>
</organism>
<sequence>MSMSDPIADMLTRIRNAQMVEKVSVSMPSSKVKVAIAQVLKDEGYIDDFAVKADGAKAELNIALKYYAGRPVIERLERVSKPGLRVYRGRNEIPQVMNGLGVAIVSTPKGVMTDRKARATGVGGEVICYVA</sequence>